<evidence type="ECO:0000250" key="1"/>
<evidence type="ECO:0000255" key="2">
    <source>
        <dbReference type="PROSITE-ProRule" id="PRU00794"/>
    </source>
</evidence>
<evidence type="ECO:0000305" key="3"/>
<evidence type="ECO:0007829" key="4">
    <source>
        <dbReference type="PDB" id="2QJO"/>
    </source>
</evidence>
<protein>
    <recommendedName>
        <fullName>Bifunctional NMN adenylyltransferase/Nudix hydrolase</fullName>
    </recommendedName>
    <domain>
        <recommendedName>
            <fullName>Nicotinamide-nucleotide adenylyltransferase</fullName>
            <ecNumber>2.7.7.1</ecNumber>
        </recommendedName>
        <alternativeName>
            <fullName>NAD(+) diphosphorylase</fullName>
        </alternativeName>
        <alternativeName>
            <fullName>NAD(+) pyrophosphorylase</fullName>
        </alternativeName>
        <alternativeName>
            <fullName>NMN adenylyltransferase</fullName>
        </alternativeName>
    </domain>
    <domain>
        <recommendedName>
            <fullName>ADP compounds hydrolase</fullName>
            <ecNumber>3.6.1.-</ecNumber>
        </recommendedName>
    </domain>
</protein>
<proteinExistence type="evidence at protein level"/>
<feature type="chain" id="PRO_0000135011" description="Bifunctional NMN adenylyltransferase/Nudix hydrolase">
    <location>
        <begin position="1"/>
        <end position="339"/>
    </location>
</feature>
<feature type="domain" description="Nudix hydrolase" evidence="2">
    <location>
        <begin position="199"/>
        <end position="335"/>
    </location>
</feature>
<feature type="region of interest" description="NMN adenylyltransferase">
    <location>
        <begin position="1"/>
        <end position="183"/>
    </location>
</feature>
<feature type="short sequence motif" description="Nudix box">
    <location>
        <begin position="233"/>
        <end position="254"/>
    </location>
</feature>
<feature type="strand" evidence="4">
    <location>
        <begin position="2"/>
        <end position="12"/>
    </location>
</feature>
<feature type="helix" evidence="4">
    <location>
        <begin position="19"/>
        <end position="31"/>
    </location>
</feature>
<feature type="strand" evidence="4">
    <location>
        <begin position="32"/>
        <end position="42"/>
    </location>
</feature>
<feature type="strand" evidence="4">
    <location>
        <begin position="48"/>
        <end position="50"/>
    </location>
</feature>
<feature type="helix" evidence="4">
    <location>
        <begin position="54"/>
        <end position="62"/>
    </location>
</feature>
<feature type="helix" evidence="4">
    <location>
        <begin position="67"/>
        <end position="70"/>
    </location>
</feature>
<feature type="strand" evidence="4">
    <location>
        <begin position="73"/>
        <end position="79"/>
    </location>
</feature>
<feature type="helix" evidence="4">
    <location>
        <begin position="85"/>
        <end position="100"/>
    </location>
</feature>
<feature type="strand" evidence="4">
    <location>
        <begin position="106"/>
        <end position="110"/>
    </location>
</feature>
<feature type="helix" evidence="4">
    <location>
        <begin position="115"/>
        <end position="121"/>
    </location>
</feature>
<feature type="strand" evidence="4">
    <location>
        <begin position="126"/>
        <end position="130"/>
    </location>
</feature>
<feature type="helix" evidence="4">
    <location>
        <begin position="139"/>
        <end position="148"/>
    </location>
</feature>
<feature type="helix" evidence="4">
    <location>
        <begin position="151"/>
        <end position="153"/>
    </location>
</feature>
<feature type="turn" evidence="4">
    <location>
        <begin position="154"/>
        <end position="157"/>
    </location>
</feature>
<feature type="helix" evidence="4">
    <location>
        <begin position="160"/>
        <end position="169"/>
    </location>
</feature>
<feature type="helix" evidence="4">
    <location>
        <begin position="173"/>
        <end position="190"/>
    </location>
</feature>
<feature type="turn" evidence="4">
    <location>
        <begin position="191"/>
        <end position="194"/>
    </location>
</feature>
<feature type="strand" evidence="4">
    <location>
        <begin position="195"/>
        <end position="197"/>
    </location>
</feature>
<feature type="strand" evidence="4">
    <location>
        <begin position="201"/>
        <end position="210"/>
    </location>
</feature>
<feature type="strand" evidence="4">
    <location>
        <begin position="213"/>
        <end position="218"/>
    </location>
</feature>
<feature type="strand" evidence="4">
    <location>
        <begin position="221"/>
        <end position="224"/>
    </location>
</feature>
<feature type="strand" evidence="4">
    <location>
        <begin position="231"/>
        <end position="234"/>
    </location>
</feature>
<feature type="helix" evidence="4">
    <location>
        <begin position="241"/>
        <end position="253"/>
    </location>
</feature>
<feature type="helix" evidence="4">
    <location>
        <begin position="259"/>
        <end position="264"/>
    </location>
</feature>
<feature type="strand" evidence="4">
    <location>
        <begin position="266"/>
        <end position="272"/>
    </location>
</feature>
<feature type="strand" evidence="4">
    <location>
        <begin position="283"/>
        <end position="291"/>
    </location>
</feature>
<feature type="strand" evidence="4">
    <location>
        <begin position="294"/>
        <end position="296"/>
    </location>
</feature>
<feature type="strand" evidence="4">
    <location>
        <begin position="305"/>
        <end position="307"/>
    </location>
</feature>
<feature type="strand" evidence="4">
    <location>
        <begin position="309"/>
        <end position="313"/>
    </location>
</feature>
<feature type="helix" evidence="4">
    <location>
        <begin position="314"/>
        <end position="319"/>
    </location>
</feature>
<feature type="helix" evidence="4">
    <location>
        <begin position="321"/>
        <end position="323"/>
    </location>
</feature>
<feature type="helix" evidence="4">
    <location>
        <begin position="328"/>
        <end position="335"/>
    </location>
</feature>
<keyword id="KW-0002">3D-structure</keyword>
<keyword id="KW-0067">ATP-binding</keyword>
<keyword id="KW-0963">Cytoplasm</keyword>
<keyword id="KW-0378">Hydrolase</keyword>
<keyword id="KW-0460">Magnesium</keyword>
<keyword id="KW-0464">Manganese</keyword>
<keyword id="KW-0511">Multifunctional enzyme</keyword>
<keyword id="KW-0520">NAD</keyword>
<keyword id="KW-0547">Nucleotide-binding</keyword>
<keyword id="KW-0548">Nucleotidyltransferase</keyword>
<keyword id="KW-0662">Pyridine nucleotide biosynthesis</keyword>
<keyword id="KW-1185">Reference proteome</keyword>
<keyword id="KW-0808">Transferase</keyword>
<accession>Q55928</accession>
<reference key="1">
    <citation type="journal article" date="1995" name="DNA Res.">
        <title>Sequence analysis of the genome of the unicellular cyanobacterium Synechocystis sp. strain PCC6803. I. Sequence features in the 1 Mb region from map positions 64% to 92% of the genome.</title>
        <authorList>
            <person name="Kaneko T."/>
            <person name="Tanaka A."/>
            <person name="Sato S."/>
            <person name="Kotani H."/>
            <person name="Sazuka T."/>
            <person name="Miyajima N."/>
            <person name="Sugiura M."/>
            <person name="Tabata S."/>
        </authorList>
    </citation>
    <scope>NUCLEOTIDE SEQUENCE [LARGE SCALE GENOMIC DNA]</scope>
    <source>
        <strain>ATCC 27184 / PCC 6803 / N-1</strain>
    </source>
</reference>
<reference key="2">
    <citation type="journal article" date="1996" name="DNA Res.">
        <title>Sequence analysis of the genome of the unicellular cyanobacterium Synechocystis sp. strain PCC6803. II. Sequence determination of the entire genome and assignment of potential protein-coding regions.</title>
        <authorList>
            <person name="Kaneko T."/>
            <person name="Sato S."/>
            <person name="Kotani H."/>
            <person name="Tanaka A."/>
            <person name="Asamizu E."/>
            <person name="Nakamura Y."/>
            <person name="Miyajima N."/>
            <person name="Hirosawa M."/>
            <person name="Sugiura M."/>
            <person name="Sasamoto S."/>
            <person name="Kimura T."/>
            <person name="Hosouchi T."/>
            <person name="Matsuno A."/>
            <person name="Muraki A."/>
            <person name="Nakazaki N."/>
            <person name="Naruo K."/>
            <person name="Okumura S."/>
            <person name="Shimpo S."/>
            <person name="Takeuchi C."/>
            <person name="Wada T."/>
            <person name="Watanabe A."/>
            <person name="Yamada M."/>
            <person name="Yasuda M."/>
            <person name="Tabata S."/>
        </authorList>
    </citation>
    <scope>NUCLEOTIDE SEQUENCE [LARGE SCALE GENOMIC DNA]</scope>
    <source>
        <strain>ATCC 27184 / PCC 6803 / Kazusa</strain>
    </source>
</reference>
<reference key="3">
    <citation type="journal article" date="1999" name="FEBS Lett.">
        <title>Synechocystis sp. slr0787 protein is a novel bifunctional enzyme endowed with both nicotinamide mononucleotide adenylyltransferase and 'Nudix' hydrolase activities.</title>
        <authorList>
            <person name="Raffaelli N."/>
            <person name="Lorenzi T."/>
            <person name="Amici A."/>
            <person name="Emanuelli M."/>
            <person name="Ruggieri S."/>
            <person name="Magni G."/>
        </authorList>
    </citation>
    <scope>CHARACTERIZATION</scope>
</reference>
<name>NADM_SYNY3</name>
<sequence>MQTKYQYGIYIGRFQPFHLGHLRTLNLALEKAEQVIIILGSHRVAADTRNPWRSPERMAMIEACLSPQILKRVHFLTVRDWLYSDNLWLAAVQQQVLKITGGSNSVVVLGHRKDASSYYLNLFPQWDYLETGHYPDFSSTAIRGAYFEGKEGDYLDKVPPAIADYLQTFQKSERYIALCDEYQFLQAYKQAWATAPYAPTFITTDAVVVQAGHVLMVRRQAKPGLGLIALPGGFIKQNETLVEGMLRELKEETRLKVPLPVLRGSIVDSHVFDAPGRSLRGRTITHAYFIQLPGGELPAVKGGDDAQKAWWMSLADLYAQEEQIYEDHFQIIQHFVSKV</sequence>
<gene>
    <name type="ordered locus">slr0787</name>
</gene>
<dbReference type="EC" id="2.7.7.1"/>
<dbReference type="EC" id="3.6.1.-"/>
<dbReference type="EMBL" id="BA000022">
    <property type="protein sequence ID" value="BAA10693.1"/>
    <property type="molecule type" value="Genomic_DNA"/>
</dbReference>
<dbReference type="PIR" id="S77001">
    <property type="entry name" value="S77001"/>
</dbReference>
<dbReference type="PDB" id="2QJO">
    <property type="method" value="X-ray"/>
    <property type="resolution" value="2.60 A"/>
    <property type="chains" value="A/B/C=1-339"/>
</dbReference>
<dbReference type="PDBsum" id="2QJO"/>
<dbReference type="SMR" id="Q55928"/>
<dbReference type="DIP" id="DIP-29582N"/>
<dbReference type="IntAct" id="Q55928">
    <property type="interactions" value="3"/>
</dbReference>
<dbReference type="STRING" id="1148.gene:10500197"/>
<dbReference type="PaxDb" id="1148-1001812"/>
<dbReference type="EnsemblBacteria" id="BAA10693">
    <property type="protein sequence ID" value="BAA10693"/>
    <property type="gene ID" value="BAA10693"/>
</dbReference>
<dbReference type="KEGG" id="syn:slr0787"/>
<dbReference type="eggNOG" id="COG1051">
    <property type="taxonomic scope" value="Bacteria"/>
</dbReference>
<dbReference type="eggNOG" id="COG1056">
    <property type="taxonomic scope" value="Bacteria"/>
</dbReference>
<dbReference type="InParanoid" id="Q55928"/>
<dbReference type="PhylomeDB" id="Q55928"/>
<dbReference type="BioCyc" id="MetaCyc:MONOMER-8321"/>
<dbReference type="BRENDA" id="2.7.7.1">
    <property type="organism ID" value="382"/>
</dbReference>
<dbReference type="BRENDA" id="3.6.1.13">
    <property type="organism ID" value="382"/>
</dbReference>
<dbReference type="UniPathway" id="UPA00253">
    <property type="reaction ID" value="UER00600"/>
</dbReference>
<dbReference type="EvolutionaryTrace" id="Q55928"/>
<dbReference type="Proteomes" id="UP000001425">
    <property type="component" value="Chromosome"/>
</dbReference>
<dbReference type="GO" id="GO:0005737">
    <property type="term" value="C:cytoplasm"/>
    <property type="evidence" value="ECO:0007669"/>
    <property type="project" value="UniProtKB-SubCell"/>
</dbReference>
<dbReference type="GO" id="GO:0005524">
    <property type="term" value="F:ATP binding"/>
    <property type="evidence" value="ECO:0007669"/>
    <property type="project" value="UniProtKB-KW"/>
</dbReference>
<dbReference type="GO" id="GO:0016787">
    <property type="term" value="F:hydrolase activity"/>
    <property type="evidence" value="ECO:0007669"/>
    <property type="project" value="UniProtKB-KW"/>
</dbReference>
<dbReference type="GO" id="GO:0042802">
    <property type="term" value="F:identical protein binding"/>
    <property type="evidence" value="ECO:0000353"/>
    <property type="project" value="IntAct"/>
</dbReference>
<dbReference type="GO" id="GO:0000309">
    <property type="term" value="F:nicotinamide-nucleotide adenylyltransferase activity"/>
    <property type="evidence" value="ECO:0007669"/>
    <property type="project" value="UniProtKB-EC"/>
</dbReference>
<dbReference type="GO" id="GO:0009435">
    <property type="term" value="P:NAD biosynthetic process"/>
    <property type="evidence" value="ECO:0007669"/>
    <property type="project" value="UniProtKB-UniPathway"/>
</dbReference>
<dbReference type="CDD" id="cd02168">
    <property type="entry name" value="NMNAT_Nudix"/>
    <property type="match status" value="1"/>
</dbReference>
<dbReference type="CDD" id="cd18873">
    <property type="entry name" value="NUDIX_NadM_like"/>
    <property type="match status" value="1"/>
</dbReference>
<dbReference type="Gene3D" id="3.40.50.620">
    <property type="entry name" value="HUPs"/>
    <property type="match status" value="1"/>
</dbReference>
<dbReference type="Gene3D" id="3.90.79.10">
    <property type="entry name" value="Nucleoside Triphosphate Pyrophosphohydrolase"/>
    <property type="match status" value="1"/>
</dbReference>
<dbReference type="InterPro" id="IPR004821">
    <property type="entry name" value="Cyt_trans-like"/>
</dbReference>
<dbReference type="InterPro" id="IPR041750">
    <property type="entry name" value="NMNAT_Nudix"/>
</dbReference>
<dbReference type="InterPro" id="IPR015797">
    <property type="entry name" value="NUDIX_hydrolase-like_dom_sf"/>
</dbReference>
<dbReference type="InterPro" id="IPR020084">
    <property type="entry name" value="NUDIX_hydrolase_CS"/>
</dbReference>
<dbReference type="InterPro" id="IPR000086">
    <property type="entry name" value="NUDIX_hydrolase_dom"/>
</dbReference>
<dbReference type="InterPro" id="IPR014729">
    <property type="entry name" value="Rossmann-like_a/b/a_fold"/>
</dbReference>
<dbReference type="NCBIfam" id="TIGR00125">
    <property type="entry name" value="cyt_tran_rel"/>
    <property type="match status" value="1"/>
</dbReference>
<dbReference type="NCBIfam" id="NF003786">
    <property type="entry name" value="PRK05379.1-2"/>
    <property type="match status" value="1"/>
</dbReference>
<dbReference type="NCBIfam" id="NF003788">
    <property type="entry name" value="PRK05379.1-5"/>
    <property type="match status" value="1"/>
</dbReference>
<dbReference type="NCBIfam" id="NF003791">
    <property type="entry name" value="PRK05379.2-3"/>
    <property type="match status" value="1"/>
</dbReference>
<dbReference type="PANTHER" id="PTHR21342:SF0">
    <property type="entry name" value="BIFUNCTIONAL NMN ADENYLYLTRANSFERASE_NUDIX HYDROLASE"/>
    <property type="match status" value="1"/>
</dbReference>
<dbReference type="PANTHER" id="PTHR21342">
    <property type="entry name" value="PHOSPHOPANTETHEINE ADENYLYLTRANSFERASE"/>
    <property type="match status" value="1"/>
</dbReference>
<dbReference type="Pfam" id="PF01467">
    <property type="entry name" value="CTP_transf_like"/>
    <property type="match status" value="1"/>
</dbReference>
<dbReference type="Pfam" id="PF00293">
    <property type="entry name" value="NUDIX"/>
    <property type="match status" value="1"/>
</dbReference>
<dbReference type="SUPFAM" id="SSF52374">
    <property type="entry name" value="Nucleotidylyl transferase"/>
    <property type="match status" value="1"/>
</dbReference>
<dbReference type="SUPFAM" id="SSF55811">
    <property type="entry name" value="Nudix"/>
    <property type="match status" value="1"/>
</dbReference>
<dbReference type="PROSITE" id="PS51462">
    <property type="entry name" value="NUDIX"/>
    <property type="match status" value="1"/>
</dbReference>
<dbReference type="PROSITE" id="PS00893">
    <property type="entry name" value="NUDIX_BOX"/>
    <property type="match status" value="1"/>
</dbReference>
<organism>
    <name type="scientific">Synechocystis sp. (strain ATCC 27184 / PCC 6803 / Kazusa)</name>
    <dbReference type="NCBI Taxonomy" id="1111708"/>
    <lineage>
        <taxon>Bacteria</taxon>
        <taxon>Bacillati</taxon>
        <taxon>Cyanobacteriota</taxon>
        <taxon>Cyanophyceae</taxon>
        <taxon>Synechococcales</taxon>
        <taxon>Merismopediaceae</taxon>
        <taxon>Synechocystis</taxon>
    </lineage>
</organism>
<comment type="function">
    <text>The Nudix hydrolase domain is active on ADP-ribose, (2')-phospho-ADP-ribose, IDP-ribose and NADPH.</text>
</comment>
<comment type="catalytic activity">
    <reaction>
        <text>beta-nicotinamide D-ribonucleotide + ATP + H(+) = diphosphate + NAD(+)</text>
        <dbReference type="Rhea" id="RHEA:21360"/>
        <dbReference type="ChEBI" id="CHEBI:14649"/>
        <dbReference type="ChEBI" id="CHEBI:15378"/>
        <dbReference type="ChEBI" id="CHEBI:30616"/>
        <dbReference type="ChEBI" id="CHEBI:33019"/>
        <dbReference type="ChEBI" id="CHEBI:57540"/>
        <dbReference type="EC" id="2.7.7.1"/>
    </reaction>
</comment>
<comment type="cofactor">
    <cofactor>
        <name>Mg(2+)</name>
        <dbReference type="ChEBI" id="CHEBI:18420"/>
    </cofactor>
</comment>
<comment type="cofactor">
    <cofactor>
        <name>Mn(2+)</name>
        <dbReference type="ChEBI" id="CHEBI:29035"/>
    </cofactor>
</comment>
<comment type="pathway">
    <text>Cofactor biosynthesis; NAD(+) biosynthesis; NAD(+) from nicotinamide D-ribonucleotide: step 1/1.</text>
</comment>
<comment type="interaction">
    <interactant intactId="EBI-1622828">
        <id>Q55928</id>
    </interactant>
    <interactant intactId="EBI-1622828">
        <id>Q55928</id>
        <label>slr0787</label>
    </interactant>
    <organismsDiffer>false</organismsDiffer>
    <experiments>2</experiments>
</comment>
<comment type="subcellular location">
    <subcellularLocation>
        <location evidence="1">Cytoplasm</location>
    </subcellularLocation>
</comment>
<comment type="similarity">
    <text evidence="3">In the N-terminal section; belongs to the archaeal NMN adenylyltransferase family.</text>
</comment>